<proteinExistence type="inferred from homology"/>
<comment type="function">
    <text evidence="1">Catalyzes the oxidative demethylation of N-methyl-L-tryptophan.</text>
</comment>
<comment type="catalytic activity">
    <reaction evidence="1">
        <text>N(alpha)-methyl-L-tryptophan + O2 + H2O = L-tryptophan + formaldehyde + H2O2</text>
        <dbReference type="Rhea" id="RHEA:28006"/>
        <dbReference type="ChEBI" id="CHEBI:15377"/>
        <dbReference type="ChEBI" id="CHEBI:15379"/>
        <dbReference type="ChEBI" id="CHEBI:16240"/>
        <dbReference type="ChEBI" id="CHEBI:16842"/>
        <dbReference type="ChEBI" id="CHEBI:57283"/>
        <dbReference type="ChEBI" id="CHEBI:57912"/>
    </reaction>
</comment>
<comment type="cofactor">
    <cofactor evidence="1">
        <name>FAD</name>
        <dbReference type="ChEBI" id="CHEBI:57692"/>
    </cofactor>
    <text evidence="1">Binds 1 FAD per subunit.</text>
</comment>
<comment type="subunit">
    <text evidence="1">Monomer.</text>
</comment>
<comment type="similarity">
    <text evidence="1">Belongs to the MSOX/MTOX family. MTOX subfamily.</text>
</comment>
<gene>
    <name evidence="1" type="primary">solA</name>
    <name type="ordered locus">Ecok1_09500</name>
    <name type="ORF">APECO1_141</name>
</gene>
<protein>
    <recommendedName>
        <fullName evidence="1">N-methyl-L-tryptophan oxidase</fullName>
        <shortName evidence="1">MTOX</shortName>
        <ecNumber evidence="1">1.5.3.-</ecNumber>
    </recommendedName>
</protein>
<reference key="1">
    <citation type="journal article" date="2007" name="J. Bacteriol.">
        <title>The genome sequence of avian pathogenic Escherichia coli strain O1:K1:H7 shares strong similarities with human extraintestinal pathogenic E. coli genomes.</title>
        <authorList>
            <person name="Johnson T.J."/>
            <person name="Kariyawasam S."/>
            <person name="Wannemuehler Y."/>
            <person name="Mangiamele P."/>
            <person name="Johnson S.J."/>
            <person name="Doetkott C."/>
            <person name="Skyberg J.A."/>
            <person name="Lynne A.M."/>
            <person name="Johnson J.R."/>
            <person name="Nolan L.K."/>
        </authorList>
    </citation>
    <scope>NUCLEOTIDE SEQUENCE [LARGE SCALE GENOMIC DNA]</scope>
</reference>
<organism>
    <name type="scientific">Escherichia coli O1:K1 / APEC</name>
    <dbReference type="NCBI Taxonomy" id="405955"/>
    <lineage>
        <taxon>Bacteria</taxon>
        <taxon>Pseudomonadati</taxon>
        <taxon>Pseudomonadota</taxon>
        <taxon>Gammaproteobacteria</taxon>
        <taxon>Enterobacterales</taxon>
        <taxon>Enterobacteriaceae</taxon>
        <taxon>Escherichia</taxon>
    </lineage>
</organism>
<name>MTOX_ECOK1</name>
<keyword id="KW-0274">FAD</keyword>
<keyword id="KW-0285">Flavoprotein</keyword>
<keyword id="KW-0560">Oxidoreductase</keyword>
<keyword id="KW-1185">Reference proteome</keyword>
<dbReference type="EC" id="1.5.3.-" evidence="1"/>
<dbReference type="EMBL" id="CP000468">
    <property type="protein sequence ID" value="ABJ00444.1"/>
    <property type="molecule type" value="Genomic_DNA"/>
</dbReference>
<dbReference type="RefSeq" id="WP_000872794.1">
    <property type="nucleotide sequence ID" value="NZ_CADILS010000019.1"/>
</dbReference>
<dbReference type="SMR" id="A1A9V4"/>
<dbReference type="KEGG" id="ecv:APECO1_141"/>
<dbReference type="HOGENOM" id="CLU_007884_2_1_6"/>
<dbReference type="Proteomes" id="UP000008216">
    <property type="component" value="Chromosome"/>
</dbReference>
<dbReference type="GO" id="GO:0005829">
    <property type="term" value="C:cytosol"/>
    <property type="evidence" value="ECO:0007669"/>
    <property type="project" value="TreeGrafter"/>
</dbReference>
<dbReference type="GO" id="GO:0050660">
    <property type="term" value="F:flavin adenine dinucleotide binding"/>
    <property type="evidence" value="ECO:0007669"/>
    <property type="project" value="InterPro"/>
</dbReference>
<dbReference type="GO" id="GO:0050131">
    <property type="term" value="F:N-methyl-L-amino-acid oxidase activity"/>
    <property type="evidence" value="ECO:0007669"/>
    <property type="project" value="InterPro"/>
</dbReference>
<dbReference type="GO" id="GO:0008115">
    <property type="term" value="F:sarcosine oxidase activity"/>
    <property type="evidence" value="ECO:0007669"/>
    <property type="project" value="TreeGrafter"/>
</dbReference>
<dbReference type="Gene3D" id="3.30.9.10">
    <property type="entry name" value="D-Amino Acid Oxidase, subunit A, domain 2"/>
    <property type="match status" value="1"/>
</dbReference>
<dbReference type="Gene3D" id="3.50.50.60">
    <property type="entry name" value="FAD/NAD(P)-binding domain"/>
    <property type="match status" value="1"/>
</dbReference>
<dbReference type="HAMAP" id="MF_00515">
    <property type="entry name" value="MTOX"/>
    <property type="match status" value="1"/>
</dbReference>
<dbReference type="InterPro" id="IPR006076">
    <property type="entry name" value="FAD-dep_OxRdtase"/>
</dbReference>
<dbReference type="InterPro" id="IPR036188">
    <property type="entry name" value="FAD/NAD-bd_sf"/>
</dbReference>
<dbReference type="InterPro" id="IPR023493">
    <property type="entry name" value="Me_Trp_Oxase_MTOX"/>
</dbReference>
<dbReference type="InterPro" id="IPR045170">
    <property type="entry name" value="MTOX"/>
</dbReference>
<dbReference type="NCBIfam" id="NF008425">
    <property type="entry name" value="PRK11259.1"/>
    <property type="match status" value="1"/>
</dbReference>
<dbReference type="PANTHER" id="PTHR10961:SF7">
    <property type="entry name" value="FAD DEPENDENT OXIDOREDUCTASE DOMAIN-CONTAINING PROTEIN"/>
    <property type="match status" value="1"/>
</dbReference>
<dbReference type="PANTHER" id="PTHR10961">
    <property type="entry name" value="PEROXISOMAL SARCOSINE OXIDASE"/>
    <property type="match status" value="1"/>
</dbReference>
<dbReference type="Pfam" id="PF01266">
    <property type="entry name" value="DAO"/>
    <property type="match status" value="1"/>
</dbReference>
<dbReference type="SUPFAM" id="SSF54373">
    <property type="entry name" value="FAD-linked reductases, C-terminal domain"/>
    <property type="match status" value="1"/>
</dbReference>
<dbReference type="SUPFAM" id="SSF51905">
    <property type="entry name" value="FAD/NAD(P)-binding domain"/>
    <property type="match status" value="1"/>
</dbReference>
<accession>A1A9V4</accession>
<feature type="chain" id="PRO_1000050793" description="N-methyl-L-tryptophan oxidase">
    <location>
        <begin position="1"/>
        <end position="372"/>
    </location>
</feature>
<feature type="binding site" evidence="1">
    <location>
        <begin position="4"/>
        <end position="34"/>
    </location>
    <ligand>
        <name>FAD</name>
        <dbReference type="ChEBI" id="CHEBI:57692"/>
    </ligand>
</feature>
<feature type="modified residue" description="S-8alpha-FAD cysteine" evidence="1">
    <location>
        <position position="308"/>
    </location>
</feature>
<sequence length="372" mass="40916">MKYDLIIIGSGSVGAAAGYYATRAGLNVLMTDAHMPPHQHGSHHGDTRLIRHAYGEGEKYVPLVLRAQMLWDELSRHNEDDPIFVRSGVINLGPADSAFLANVAHSAEQWQLNVEKLDAQGIMARWPEIRVPDNYIGLFETDSGFLRSELAIKTWIQLAKEAGCAQLFNCPVTAIRHDDDGVTIETADGEYQAKKAIVCAGTWVKDLLPELPVQPVRKVFAWYQADGRYSVKNKFPAFTGELPNGDQYYGFPAENDALKIGKHNGGQVIHSADERVPFAEVVSDGSEAFPFLRNVLPGIGCCLYGAACTYDNSPDEDFIIDTLPGHDNTLLITGLSGHGFKFASVLGEIAADFAQDKKSDFDLTPFRLSRFQ</sequence>
<evidence type="ECO:0000255" key="1">
    <source>
        <dbReference type="HAMAP-Rule" id="MF_00515"/>
    </source>
</evidence>